<gene>
    <name evidence="1" type="primary">L4</name>
</gene>
<keyword id="KW-0143">Chaperone</keyword>
<keyword id="KW-1262">Eukaryotic host gene expression shutoff by virus</keyword>
<keyword id="KW-1193">Eukaryotic host translation shutoff by virus</keyword>
<keyword id="KW-1035">Host cytoplasm</keyword>
<keyword id="KW-1190">Host gene expression shutoff by virus</keyword>
<keyword id="KW-0945">Host-virus interaction</keyword>
<keyword id="KW-1075">Inhibition of eukaryotic host translation factors by virus</keyword>
<keyword id="KW-0426">Late protein</keyword>
<keyword id="KW-0488">Methylation</keyword>
<keyword id="KW-0597">Phosphoprotein</keyword>
<keyword id="KW-0694">RNA-binding</keyword>
<keyword id="KW-1155">Translational shunt</keyword>
<keyword id="KW-0813">Transport</keyword>
<accession>P36856</accession>
<organismHost>
    <name type="scientific">Galliformes</name>
    <dbReference type="NCBI Taxonomy" id="8976"/>
</organismHost>
<comment type="function">
    <text evidence="1">Protein that inhibits host translation while promoting late viral translation by ribosome shunting. Blocks host cap-dependent translation by binding to eIF4G, displacing MKNK1 from cap initiation complexes and preventing EIF4E phosphorylation. Binds to the tripartite leader sequence of viral late mRNAs and recruits host eIF4G, PABPC1/poly-A binding protein and 40S ribosomes subunits on viral mRNAs, allowing ribosome shunting and efficient translation of late viral mRNAs even though conventional translation via ribosome scanning from the cap has been shut off in the host cell. During assembly, acts as a chaperone protein that helps hexon proteins assembly into trimers.</text>
</comment>
<comment type="subunit">
    <text evidence="1">Monomer. Interacts with hexon protein; this interaction allows chaperoning and trimerization of hexon proteins. Interacts (via N-terminus) with host initiation factor EIF4G (via C-terminus). Interacts (via RRM domain) with viral mRNAs that contain the tripartite leader; this interaction allows ribosome shunting and expression of viral late mRNAs.</text>
</comment>
<comment type="subcellular location">
    <subcellularLocation>
        <location evidence="1">Host cytoplasm</location>
    </subcellularLocation>
</comment>
<comment type="induction">
    <text evidence="1">Expressed in the late phase of the viral replicative cycle.</text>
</comment>
<comment type="PTM">
    <text evidence="1">Might be cleaved by the viral protease.</text>
</comment>
<comment type="PTM">
    <text evidence="1">Phosphorylated. Tyrosine phosphorylation enhances preferential binding to tripartite leader mRNAs and allows ribosome shunting.</text>
</comment>
<comment type="PTM">
    <text evidence="1">Methylated. Asymmetric dimethylation by host PRMT1 of the Arg/Gly-rich region may regulate shutoff protein binding to hexon and promote the capsid assembly in the nucleus.</text>
</comment>
<comment type="miscellaneous">
    <text evidence="1">All late proteins expressed from the major late promoter are produced by alternative splicing and alternative polyadenylation of the same gene giving rise to non-overlapping ORFs. A leader sequence is present in the N-terminus of all these mRNAs and is recognized by the viral shutoff protein to provide expression although conventional translation via ribosome scanning from the cap has been shut off in the host cell.</text>
</comment>
<comment type="similarity">
    <text evidence="1">Belongs to the adenoviridae shutoff protein family.</text>
</comment>
<reference key="1">
    <citation type="journal article" date="1993" name="Gene">
        <title>Identification of a fowl adenovirus gene with sequence homology to the 100K gene of human adenovirus.</title>
        <authorList>
            <person name="Sheppard M."/>
        </authorList>
    </citation>
    <scope>NUCLEOTIDE SEQUENCE [GENOMIC DNA]</scope>
</reference>
<protein>
    <recommendedName>
        <fullName evidence="1">Shutoff protein</fullName>
    </recommendedName>
    <alternativeName>
        <fullName evidence="1">100 kDa protein</fullName>
        <shortName evidence="1">p100K</shortName>
    </alternativeName>
    <alternativeName>
        <fullName evidence="1">100K-chaperone protein</fullName>
    </alternativeName>
    <alternativeName>
        <fullName evidence="1">L4-100K</fullName>
    </alternativeName>
    <alternativeName>
        <fullName evidence="1">Shutoff protein 100K</fullName>
    </alternativeName>
</protein>
<evidence type="ECO:0000255" key="1">
    <source>
        <dbReference type="HAMAP-Rule" id="MF_04060"/>
    </source>
</evidence>
<evidence type="ECO:0000256" key="2">
    <source>
        <dbReference type="SAM" id="MobiDB-lite"/>
    </source>
</evidence>
<sequence length="798" mass="89029">MESTADGDKARGEEPVAEGEASDIRRGDGEFPAPEDEHPDDGEPDEPADRDDRSGESDADSGYYSADGGRDAECDGEAARPDTPTDESSAPTTPSTAVRRSSGESSPDRGGCFSHSSDSELGCATETRDPFAAGLRKCIERQAMILTGALKDAHVDPPLDSMPLTVDAVQRQLERFLFNPDPKVPREHVELATTFMPPFMTPKAIANYHIFCGNRPIPPSCKANRSGSEVLRAAENARFFKRLPRWKQGVTVDDGLGDEVSPITELKDAKLVPLRDDTSRLEWAKMRGEHVRYFCYPSLHMPPKISRMLMEVLLQPFAQEVASGPDQEDPEPVYPTAELACIVDPEGVMQPHGLARAIEVDGHGSAGRPLYRSARAYGSVFREPSSIKKAQEVLHHTFHHGFVALIRETAKVNLSNYATFHGITYNDPLNNCMLAKLMEGSDKRDYVVDSIYLFLVLTWQTAMGMWQQAIQEETIEAYREAFTRLRRAIYALETPTEISKAIVDVLMDGDRLCAEMPKLPNFTNGSQISAFRQFIMERSNIPTTAAPFLPSDFVPLSFRQAQPLLWDQVYLLQTAFFLCNHGGYLWEPEETENPNPRDRTYCPCNLCSPHRMPQHNVPLHNELLAINTFEIRTDDGKTFKLTPELWANAYLDKFEPKDYHPFEVVHFPQHEEAFSRDLTACVTKSPEILSLIRQIQASREEFLLTRGKGVYKDPDTGEVLTPQPDLQAGAARRQALPTAYADHARGAATSAEPSRALRPTSVATAAGNRTRGCSSARYRLGPTLRRRSNSSWPREWST</sequence>
<feature type="chain" id="PRO_0000221863" description="Shutoff protein">
    <location>
        <begin position="1"/>
        <end position="798"/>
    </location>
</feature>
<feature type="domain" description="RRM" evidence="1">
    <location>
        <begin position="379"/>
        <end position="497"/>
    </location>
</feature>
<feature type="region of interest" description="Disordered" evidence="2">
    <location>
        <begin position="1"/>
        <end position="123"/>
    </location>
</feature>
<feature type="region of interest" description="Binding to host EIF4G" evidence="1">
    <location>
        <begin position="309"/>
        <end position="376"/>
    </location>
</feature>
<feature type="region of interest" description="Disordered" evidence="2">
    <location>
        <begin position="740"/>
        <end position="798"/>
    </location>
</feature>
<feature type="compositionally biased region" description="Basic and acidic residues" evidence="2">
    <location>
        <begin position="1"/>
        <end position="14"/>
    </location>
</feature>
<feature type="compositionally biased region" description="Acidic residues" evidence="2">
    <location>
        <begin position="33"/>
        <end position="49"/>
    </location>
</feature>
<feature type="compositionally biased region" description="Basic and acidic residues" evidence="2">
    <location>
        <begin position="68"/>
        <end position="80"/>
    </location>
</feature>
<feature type="compositionally biased region" description="Polar residues" evidence="2">
    <location>
        <begin position="86"/>
        <end position="105"/>
    </location>
</feature>
<feature type="compositionally biased region" description="Polar residues" evidence="2">
    <location>
        <begin position="789"/>
        <end position="798"/>
    </location>
</feature>
<feature type="modified residue" description="Phosphotyrosine; by host" evidence="1">
    <location>
        <position position="711"/>
    </location>
</feature>
<dbReference type="EMBL" id="L07890">
    <property type="protein sequence ID" value="AAA72328.1"/>
    <property type="molecule type" value="Genomic_DNA"/>
</dbReference>
<dbReference type="PIR" id="JN0878">
    <property type="entry name" value="JN0878"/>
</dbReference>
<dbReference type="SMR" id="P36856"/>
<dbReference type="GO" id="GO:0043657">
    <property type="term" value="C:host cell"/>
    <property type="evidence" value="ECO:0007669"/>
    <property type="project" value="GOC"/>
</dbReference>
<dbReference type="GO" id="GO:0030430">
    <property type="term" value="C:host cell cytoplasm"/>
    <property type="evidence" value="ECO:0007669"/>
    <property type="project" value="UniProtKB-SubCell"/>
</dbReference>
<dbReference type="GO" id="GO:0003723">
    <property type="term" value="F:RNA binding"/>
    <property type="evidence" value="ECO:0007669"/>
    <property type="project" value="UniProtKB-UniRule"/>
</dbReference>
<dbReference type="GO" id="GO:0019060">
    <property type="term" value="P:intracellular transport of viral protein in host cell"/>
    <property type="evidence" value="ECO:0007669"/>
    <property type="project" value="UniProtKB-UniRule"/>
</dbReference>
<dbReference type="GO" id="GO:0039657">
    <property type="term" value="P:symbiont-mediated suppression of host gene expression"/>
    <property type="evidence" value="ECO:0007669"/>
    <property type="project" value="UniProtKB-UniRule"/>
</dbReference>
<dbReference type="GO" id="GO:0039606">
    <property type="term" value="P:symbiont-mediated suppression of host translation initiation"/>
    <property type="evidence" value="ECO:0007669"/>
    <property type="project" value="UniProtKB-KW"/>
</dbReference>
<dbReference type="GO" id="GO:0039704">
    <property type="term" value="P:viral translational shunt"/>
    <property type="evidence" value="ECO:0000250"/>
    <property type="project" value="UniProtKB"/>
</dbReference>
<dbReference type="HAMAP" id="MF_04060">
    <property type="entry name" value="ADV_SHUT"/>
    <property type="match status" value="1"/>
</dbReference>
<dbReference type="InterPro" id="IPR003381">
    <property type="entry name" value="L4"/>
</dbReference>
<dbReference type="Pfam" id="PF02438">
    <property type="entry name" value="Adeno_100"/>
    <property type="match status" value="1"/>
</dbReference>
<proteinExistence type="inferred from homology"/>
<name>SHUT_ADEGX</name>
<organism>
    <name type="scientific">Fowl adenovirus C serotype 10 (strain SA2)</name>
    <name type="common">FAdV-10</name>
    <name type="synonym">Fowl adenovirus 10</name>
    <dbReference type="NCBI Taxonomy" id="10547"/>
    <lineage>
        <taxon>Viruses</taxon>
        <taxon>Varidnaviria</taxon>
        <taxon>Bamfordvirae</taxon>
        <taxon>Preplasmiviricota</taxon>
        <taxon>Tectiliviricetes</taxon>
        <taxon>Rowavirales</taxon>
        <taxon>Adenoviridae</taxon>
        <taxon>Aviadenovirus</taxon>
        <taxon>Fowl aviadenovirus C</taxon>
    </lineage>
</organism>